<sequence>CAKKREWCAKTEDCCCPMKCIYAWYNEQSSCQTTFSGMFKKC</sequence>
<evidence type="ECO:0000250" key="1">
    <source>
        <dbReference type="UniProtKB" id="P13494"/>
    </source>
</evidence>
<evidence type="ECO:0000269" key="2">
    <source>
    </source>
</evidence>
<evidence type="ECO:0000305" key="3"/>
<feature type="chain" id="PRO_0000087656" description="Delta-actinopoditoxin-Mb1a">
    <location>
        <begin position="1"/>
        <end position="42"/>
    </location>
</feature>
<feature type="disulfide bond" evidence="1">
    <location>
        <begin position="1"/>
        <end position="15"/>
    </location>
</feature>
<feature type="disulfide bond" evidence="1">
    <location>
        <begin position="8"/>
        <end position="20"/>
    </location>
</feature>
<feature type="disulfide bond" evidence="1">
    <location>
        <begin position="14"/>
        <end position="31"/>
    </location>
</feature>
<feature type="disulfide bond" evidence="1">
    <location>
        <begin position="16"/>
        <end position="42"/>
    </location>
</feature>
<name>TDM1A_MISBR</name>
<protein>
    <recommendedName>
        <fullName>Delta-actinopoditoxin-Mb1a</fullName>
        <shortName>Delta-AOTX-Mb1a</shortName>
    </recommendedName>
    <alternativeName>
        <fullName>Delta-missulenatoxin-Mb1a</fullName>
        <shortName>Delta-MSTX-Mb1a</shortName>
    </alternativeName>
</protein>
<dbReference type="SMR" id="P83608"/>
<dbReference type="ArachnoServer" id="AS000169">
    <property type="toxin name" value="delta-actinopoditoxin-Mb1a"/>
</dbReference>
<dbReference type="GO" id="GO:0005576">
    <property type="term" value="C:extracellular region"/>
    <property type="evidence" value="ECO:0007669"/>
    <property type="project" value="UniProtKB-SubCell"/>
</dbReference>
<dbReference type="GO" id="GO:0019871">
    <property type="term" value="F:sodium channel inhibitor activity"/>
    <property type="evidence" value="ECO:0007669"/>
    <property type="project" value="InterPro"/>
</dbReference>
<dbReference type="GO" id="GO:0090729">
    <property type="term" value="F:toxin activity"/>
    <property type="evidence" value="ECO:0007669"/>
    <property type="project" value="UniProtKB-KW"/>
</dbReference>
<dbReference type="Gene3D" id="4.10.40.10">
    <property type="match status" value="1"/>
</dbReference>
<dbReference type="InterPro" id="IPR008017">
    <property type="entry name" value="Delta-hexatoxin"/>
</dbReference>
<dbReference type="Pfam" id="PF05353">
    <property type="entry name" value="Atracotoxin"/>
    <property type="match status" value="1"/>
</dbReference>
<dbReference type="SUPFAM" id="SSF57059">
    <property type="entry name" value="omega toxin-like"/>
    <property type="match status" value="1"/>
</dbReference>
<dbReference type="PROSITE" id="PS60018">
    <property type="entry name" value="DELTA_ACTX"/>
    <property type="match status" value="1"/>
</dbReference>
<reference key="1">
    <citation type="journal article" date="2003" name="FEBS Lett.">
        <title>Isolation of delta-missulenatoxin-Mb1a, the major vertebrate-active spider delta-toxin from the venom of Missulena bradleyi (Actinopodidae).</title>
        <authorList>
            <person name="Gunning S.J."/>
            <person name="Chong Y."/>
            <person name="Khalife A.A."/>
            <person name="Hains P.G."/>
            <person name="Broady K.W."/>
            <person name="Nicholson G.M."/>
        </authorList>
    </citation>
    <scope>PROTEIN SEQUENCE</scope>
    <scope>FUNCTION</scope>
    <scope>SUBCELLULAR LOCATION</scope>
    <scope>TISSUE SPECIFICITY</scope>
    <scope>MASS SPECTROMETRY</scope>
    <source>
        <tissue>Venom</tissue>
    </source>
</reference>
<proteinExistence type="evidence at protein level"/>
<comment type="function">
    <text evidence="2">Neurotoxin that slows the inactivation of vertebrate tetrodotoxin-sensitive voltage-gated sodium channels (Nav) and most likely insect sodium channels presumably by binding to site 3 of the channel. Effects are an increase in resting tension, a muscle fasciculation and a decrease in indirect twitch tension. It fails to affect tetrodotoxin-resistant sodium currents. In vivo, is lethal to both vertebrates and insects.</text>
</comment>
<comment type="subcellular location">
    <subcellularLocation>
        <location evidence="2">Secreted</location>
    </subcellularLocation>
</comment>
<comment type="tissue specificity">
    <text evidence="2">Expressed by the venom gland.</text>
</comment>
<comment type="domain">
    <text evidence="3">The presence of a 'disulfide through disulfide knot' structurally defines this protein as a knottin.</text>
</comment>
<comment type="mass spectrometry"/>
<comment type="miscellaneous">
    <text>In this species, the venom of the male is lethal rather than that of the female.</text>
</comment>
<comment type="miscellaneous">
    <text>Is the sole lethal toxin in the venom of male M.bradleyi.</text>
</comment>
<comment type="similarity">
    <text evidence="3">Belongs to the neurotoxin 06 (delta-actx) family.</text>
</comment>
<accession>P83608</accession>
<keyword id="KW-0903">Direct protein sequencing</keyword>
<keyword id="KW-1015">Disulfide bond</keyword>
<keyword id="KW-0872">Ion channel impairing toxin</keyword>
<keyword id="KW-0960">Knottin</keyword>
<keyword id="KW-0528">Neurotoxin</keyword>
<keyword id="KW-0964">Secreted</keyword>
<keyword id="KW-0800">Toxin</keyword>
<keyword id="KW-0738">Voltage-gated sodium channel impairing toxin</keyword>
<organism>
    <name type="scientific">Missulena bradleyi</name>
    <name type="common">Eastern mouse spider</name>
    <dbReference type="NCBI Taxonomy" id="230234"/>
    <lineage>
        <taxon>Eukaryota</taxon>
        <taxon>Metazoa</taxon>
        <taxon>Ecdysozoa</taxon>
        <taxon>Arthropoda</taxon>
        <taxon>Chelicerata</taxon>
        <taxon>Arachnida</taxon>
        <taxon>Araneae</taxon>
        <taxon>Mygalomorphae</taxon>
        <taxon>Actinopodidae</taxon>
        <taxon>Missulena</taxon>
    </lineage>
</organism>